<keyword id="KW-0312">Gluconeogenesis</keyword>
<keyword id="KW-0324">Glycolysis</keyword>
<keyword id="KW-0413">Isomerase</keyword>
<dbReference type="EC" id="5.4.2.11" evidence="1"/>
<dbReference type="EMBL" id="CP000431">
    <property type="protein sequence ID" value="ABG93877.1"/>
    <property type="molecule type" value="Genomic_DNA"/>
</dbReference>
<dbReference type="RefSeq" id="WP_009474747.1">
    <property type="nucleotide sequence ID" value="NC_008268.1"/>
</dbReference>
<dbReference type="SMR" id="Q0SF09"/>
<dbReference type="KEGG" id="rha:RHA1_ro02070"/>
<dbReference type="eggNOG" id="COG0588">
    <property type="taxonomic scope" value="Bacteria"/>
</dbReference>
<dbReference type="HOGENOM" id="CLU_033323_1_1_11"/>
<dbReference type="UniPathway" id="UPA00109">
    <property type="reaction ID" value="UER00186"/>
</dbReference>
<dbReference type="Proteomes" id="UP000008710">
    <property type="component" value="Chromosome"/>
</dbReference>
<dbReference type="GO" id="GO:0004619">
    <property type="term" value="F:phosphoglycerate mutase activity"/>
    <property type="evidence" value="ECO:0007669"/>
    <property type="project" value="UniProtKB-EC"/>
</dbReference>
<dbReference type="GO" id="GO:0006094">
    <property type="term" value="P:gluconeogenesis"/>
    <property type="evidence" value="ECO:0007669"/>
    <property type="project" value="UniProtKB-UniRule"/>
</dbReference>
<dbReference type="GO" id="GO:0006096">
    <property type="term" value="P:glycolytic process"/>
    <property type="evidence" value="ECO:0007669"/>
    <property type="project" value="UniProtKB-UniRule"/>
</dbReference>
<dbReference type="CDD" id="cd07067">
    <property type="entry name" value="HP_PGM_like"/>
    <property type="match status" value="1"/>
</dbReference>
<dbReference type="FunFam" id="3.40.50.1240:FF:000012">
    <property type="entry name" value="Phosphoglycerate mutase 1"/>
    <property type="match status" value="1"/>
</dbReference>
<dbReference type="Gene3D" id="3.40.50.1240">
    <property type="entry name" value="Phosphoglycerate mutase-like"/>
    <property type="match status" value="1"/>
</dbReference>
<dbReference type="HAMAP" id="MF_01039">
    <property type="entry name" value="PGAM_GpmA"/>
    <property type="match status" value="1"/>
</dbReference>
<dbReference type="InterPro" id="IPR013078">
    <property type="entry name" value="His_Pase_superF_clade-1"/>
</dbReference>
<dbReference type="InterPro" id="IPR029033">
    <property type="entry name" value="His_PPase_superfam"/>
</dbReference>
<dbReference type="InterPro" id="IPR001345">
    <property type="entry name" value="PG/BPGM_mutase_AS"/>
</dbReference>
<dbReference type="InterPro" id="IPR005952">
    <property type="entry name" value="Phosphogly_mut1"/>
</dbReference>
<dbReference type="NCBIfam" id="TIGR01258">
    <property type="entry name" value="pgm_1"/>
    <property type="match status" value="1"/>
</dbReference>
<dbReference type="NCBIfam" id="NF010713">
    <property type="entry name" value="PRK14115.1"/>
    <property type="match status" value="1"/>
</dbReference>
<dbReference type="NCBIfam" id="NF010718">
    <property type="entry name" value="PRK14120.1"/>
    <property type="match status" value="1"/>
</dbReference>
<dbReference type="PANTHER" id="PTHR11931">
    <property type="entry name" value="PHOSPHOGLYCERATE MUTASE"/>
    <property type="match status" value="1"/>
</dbReference>
<dbReference type="Pfam" id="PF00300">
    <property type="entry name" value="His_Phos_1"/>
    <property type="match status" value="1"/>
</dbReference>
<dbReference type="PIRSF" id="PIRSF000709">
    <property type="entry name" value="6PFK_2-Ptase"/>
    <property type="match status" value="1"/>
</dbReference>
<dbReference type="SMART" id="SM00855">
    <property type="entry name" value="PGAM"/>
    <property type="match status" value="1"/>
</dbReference>
<dbReference type="SUPFAM" id="SSF53254">
    <property type="entry name" value="Phosphoglycerate mutase-like"/>
    <property type="match status" value="1"/>
</dbReference>
<dbReference type="PROSITE" id="PS00175">
    <property type="entry name" value="PG_MUTASE"/>
    <property type="match status" value="1"/>
</dbReference>
<organism>
    <name type="scientific">Rhodococcus jostii (strain RHA1)</name>
    <dbReference type="NCBI Taxonomy" id="101510"/>
    <lineage>
        <taxon>Bacteria</taxon>
        <taxon>Bacillati</taxon>
        <taxon>Actinomycetota</taxon>
        <taxon>Actinomycetes</taxon>
        <taxon>Mycobacteriales</taxon>
        <taxon>Nocardiaceae</taxon>
        <taxon>Rhodococcus</taxon>
    </lineage>
</organism>
<accession>Q0SF09</accession>
<feature type="chain" id="PRO_1000084329" description="2,3-bisphosphoglycerate-dependent phosphoglycerate mutase">
    <location>
        <begin position="1"/>
        <end position="251"/>
    </location>
</feature>
<feature type="active site" description="Tele-phosphohistidine intermediate" evidence="1">
    <location>
        <position position="14"/>
    </location>
</feature>
<feature type="active site" description="Proton donor/acceptor" evidence="1">
    <location>
        <position position="92"/>
    </location>
</feature>
<feature type="binding site" evidence="1">
    <location>
        <begin position="13"/>
        <end position="20"/>
    </location>
    <ligand>
        <name>substrate</name>
    </ligand>
</feature>
<feature type="binding site" evidence="1">
    <location>
        <begin position="26"/>
        <end position="27"/>
    </location>
    <ligand>
        <name>substrate</name>
    </ligand>
</feature>
<feature type="binding site" evidence="1">
    <location>
        <position position="65"/>
    </location>
    <ligand>
        <name>substrate</name>
    </ligand>
</feature>
<feature type="binding site" evidence="1">
    <location>
        <begin position="92"/>
        <end position="95"/>
    </location>
    <ligand>
        <name>substrate</name>
    </ligand>
</feature>
<feature type="binding site" evidence="1">
    <location>
        <position position="103"/>
    </location>
    <ligand>
        <name>substrate</name>
    </ligand>
</feature>
<feature type="binding site" evidence="1">
    <location>
        <begin position="119"/>
        <end position="120"/>
    </location>
    <ligand>
        <name>substrate</name>
    </ligand>
</feature>
<feature type="binding site" evidence="1">
    <location>
        <begin position="186"/>
        <end position="187"/>
    </location>
    <ligand>
        <name>substrate</name>
    </ligand>
</feature>
<feature type="site" description="Transition state stabilizer" evidence="1">
    <location>
        <position position="185"/>
    </location>
</feature>
<evidence type="ECO:0000255" key="1">
    <source>
        <dbReference type="HAMAP-Rule" id="MF_01039"/>
    </source>
</evidence>
<sequence length="251" mass="27743">MNGMSTGTLVLLRHGESEWNALNLFTGWVDVHLTDKGIAEGKRAGELLLEHNLLPDVLYTSLLRRAISTANIALDTADRHWIPVIRDWRLNERHYGALQGRNKAQVKEKYGDEQFMLWRRSYDTPPPPIEAGSEYSQDTDPRYANLDKVPLTECLKDVVVRLIPYWEDTISADLKAGKTVLITAHGNSLRALVKHLDGISDEDIAGLNIPTGIPLRYDLDENLKPLNPGGTYLDPEAAAAGAAAVANQGGK</sequence>
<proteinExistence type="inferred from homology"/>
<reference key="1">
    <citation type="journal article" date="2006" name="Proc. Natl. Acad. Sci. U.S.A.">
        <title>The complete genome of Rhodococcus sp. RHA1 provides insights into a catabolic powerhouse.</title>
        <authorList>
            <person name="McLeod M.P."/>
            <person name="Warren R.L."/>
            <person name="Hsiao W.W.L."/>
            <person name="Araki N."/>
            <person name="Myhre M."/>
            <person name="Fernandes C."/>
            <person name="Miyazawa D."/>
            <person name="Wong W."/>
            <person name="Lillquist A.L."/>
            <person name="Wang D."/>
            <person name="Dosanjh M."/>
            <person name="Hara H."/>
            <person name="Petrescu A."/>
            <person name="Morin R.D."/>
            <person name="Yang G."/>
            <person name="Stott J.M."/>
            <person name="Schein J.E."/>
            <person name="Shin H."/>
            <person name="Smailus D."/>
            <person name="Siddiqui A.S."/>
            <person name="Marra M.A."/>
            <person name="Jones S.J.M."/>
            <person name="Holt R."/>
            <person name="Brinkman F.S.L."/>
            <person name="Miyauchi K."/>
            <person name="Fukuda M."/>
            <person name="Davies J.E."/>
            <person name="Mohn W.W."/>
            <person name="Eltis L.D."/>
        </authorList>
    </citation>
    <scope>NUCLEOTIDE SEQUENCE [LARGE SCALE GENOMIC DNA]</scope>
    <source>
        <strain>RHA1</strain>
    </source>
</reference>
<name>GPMA_RHOJR</name>
<protein>
    <recommendedName>
        <fullName evidence="1">2,3-bisphosphoglycerate-dependent phosphoglycerate mutase</fullName>
        <shortName evidence="1">BPG-dependent PGAM</shortName>
        <shortName evidence="1">PGAM</shortName>
        <shortName evidence="1">Phosphoglyceromutase</shortName>
        <shortName evidence="1">dPGM</shortName>
        <ecNumber evidence="1">5.4.2.11</ecNumber>
    </recommendedName>
</protein>
<gene>
    <name evidence="1" type="primary">gpmA</name>
    <name type="ordered locus">RHA1_ro02070</name>
</gene>
<comment type="function">
    <text evidence="1">Catalyzes the interconversion of 2-phosphoglycerate and 3-phosphoglycerate.</text>
</comment>
<comment type="catalytic activity">
    <reaction evidence="1">
        <text>(2R)-2-phosphoglycerate = (2R)-3-phosphoglycerate</text>
        <dbReference type="Rhea" id="RHEA:15901"/>
        <dbReference type="ChEBI" id="CHEBI:58272"/>
        <dbReference type="ChEBI" id="CHEBI:58289"/>
        <dbReference type="EC" id="5.4.2.11"/>
    </reaction>
</comment>
<comment type="pathway">
    <text evidence="1">Carbohydrate degradation; glycolysis; pyruvate from D-glyceraldehyde 3-phosphate: step 3/5.</text>
</comment>
<comment type="similarity">
    <text evidence="1">Belongs to the phosphoglycerate mutase family. BPG-dependent PGAM subfamily.</text>
</comment>